<evidence type="ECO:0000255" key="1">
    <source>
        <dbReference type="HAMAP-Rule" id="MF_00005"/>
    </source>
</evidence>
<sequence length="405" mass="45164">MADVKKVVLAYSGGLDTSVILKWLQDTYNCEVVTFTADLGQGEEVEPARAKAQAMGVKEIYIDDLREEFVRDFVFPMFRANTVYEGEYLLGTSIARPLIAKRLIEIANETGADAISHGATGKGNDQVRFELGAYALKPGVKVIAPWREWDLLSREKLMDYAEKHGIPIERHGKKKSPYSMDANLLHISYEGGVLEDTWTEHEEDMWRWSVSPENAPDQATYIELTYRNGDIVAIDGVEKSPATVLADLNRIGGANGIGRLDIVENRYVGMKSRGCYETPGGTIMLKAHRAIESITLDREVAHLKDELMPKYASLIYTGYWWSPERLMLQQMIDASQVNVNGVVRLKLYKGNVTVVGRKSDDSLFDANIATFEEDGGAYNQADAAGFIKLNALRMRIAANKGRSLL</sequence>
<feature type="chain" id="PRO_0000148627" description="Argininosuccinate synthase">
    <location>
        <begin position="1"/>
        <end position="405"/>
    </location>
</feature>
<feature type="binding site" evidence="1">
    <location>
        <begin position="10"/>
        <end position="18"/>
    </location>
    <ligand>
        <name>ATP</name>
        <dbReference type="ChEBI" id="CHEBI:30616"/>
    </ligand>
</feature>
<feature type="binding site" evidence="1">
    <location>
        <position position="37"/>
    </location>
    <ligand>
        <name>ATP</name>
        <dbReference type="ChEBI" id="CHEBI:30616"/>
    </ligand>
</feature>
<feature type="binding site" evidence="1">
    <location>
        <position position="88"/>
    </location>
    <ligand>
        <name>L-citrulline</name>
        <dbReference type="ChEBI" id="CHEBI:57743"/>
    </ligand>
</feature>
<feature type="binding site" evidence="1">
    <location>
        <position position="93"/>
    </location>
    <ligand>
        <name>L-citrulline</name>
        <dbReference type="ChEBI" id="CHEBI:57743"/>
    </ligand>
</feature>
<feature type="binding site" evidence="1">
    <location>
        <position position="118"/>
    </location>
    <ligand>
        <name>ATP</name>
        <dbReference type="ChEBI" id="CHEBI:30616"/>
    </ligand>
</feature>
<feature type="binding site" evidence="1">
    <location>
        <position position="120"/>
    </location>
    <ligand>
        <name>L-aspartate</name>
        <dbReference type="ChEBI" id="CHEBI:29991"/>
    </ligand>
</feature>
<feature type="binding site" evidence="1">
    <location>
        <position position="124"/>
    </location>
    <ligand>
        <name>L-aspartate</name>
        <dbReference type="ChEBI" id="CHEBI:29991"/>
    </ligand>
</feature>
<feature type="binding site" evidence="1">
    <location>
        <position position="124"/>
    </location>
    <ligand>
        <name>L-citrulline</name>
        <dbReference type="ChEBI" id="CHEBI:57743"/>
    </ligand>
</feature>
<feature type="binding site" evidence="1">
    <location>
        <position position="125"/>
    </location>
    <ligand>
        <name>L-aspartate</name>
        <dbReference type="ChEBI" id="CHEBI:29991"/>
    </ligand>
</feature>
<feature type="binding site" evidence="1">
    <location>
        <position position="128"/>
    </location>
    <ligand>
        <name>L-citrulline</name>
        <dbReference type="ChEBI" id="CHEBI:57743"/>
    </ligand>
</feature>
<feature type="binding site" evidence="1">
    <location>
        <position position="179"/>
    </location>
    <ligand>
        <name>L-citrulline</name>
        <dbReference type="ChEBI" id="CHEBI:57743"/>
    </ligand>
</feature>
<feature type="binding site" evidence="1">
    <location>
        <position position="188"/>
    </location>
    <ligand>
        <name>L-citrulline</name>
        <dbReference type="ChEBI" id="CHEBI:57743"/>
    </ligand>
</feature>
<feature type="binding site" evidence="1">
    <location>
        <position position="264"/>
    </location>
    <ligand>
        <name>L-citrulline</name>
        <dbReference type="ChEBI" id="CHEBI:57743"/>
    </ligand>
</feature>
<feature type="binding site" evidence="1">
    <location>
        <position position="276"/>
    </location>
    <ligand>
        <name>L-citrulline</name>
        <dbReference type="ChEBI" id="CHEBI:57743"/>
    </ligand>
</feature>
<organism>
    <name type="scientific">Pseudomonas putida (strain ATCC 47054 / DSM 6125 / CFBP 8728 / NCIMB 11950 / KT2440)</name>
    <dbReference type="NCBI Taxonomy" id="160488"/>
    <lineage>
        <taxon>Bacteria</taxon>
        <taxon>Pseudomonadati</taxon>
        <taxon>Pseudomonadota</taxon>
        <taxon>Gammaproteobacteria</taxon>
        <taxon>Pseudomonadales</taxon>
        <taxon>Pseudomonadaceae</taxon>
        <taxon>Pseudomonas</taxon>
    </lineage>
</organism>
<keyword id="KW-0028">Amino-acid biosynthesis</keyword>
<keyword id="KW-0055">Arginine biosynthesis</keyword>
<keyword id="KW-0067">ATP-binding</keyword>
<keyword id="KW-0963">Cytoplasm</keyword>
<keyword id="KW-0436">Ligase</keyword>
<keyword id="KW-0547">Nucleotide-binding</keyword>
<keyword id="KW-1185">Reference proteome</keyword>
<accession>P59604</accession>
<gene>
    <name evidence="1" type="primary">argG</name>
    <name type="ordered locus">PP_1088</name>
</gene>
<reference key="1">
    <citation type="journal article" date="2002" name="Environ. Microbiol.">
        <title>Complete genome sequence and comparative analysis of the metabolically versatile Pseudomonas putida KT2440.</title>
        <authorList>
            <person name="Nelson K.E."/>
            <person name="Weinel C."/>
            <person name="Paulsen I.T."/>
            <person name="Dodson R.J."/>
            <person name="Hilbert H."/>
            <person name="Martins dos Santos V.A.P."/>
            <person name="Fouts D.E."/>
            <person name="Gill S.R."/>
            <person name="Pop M."/>
            <person name="Holmes M."/>
            <person name="Brinkac L.M."/>
            <person name="Beanan M.J."/>
            <person name="DeBoy R.T."/>
            <person name="Daugherty S.C."/>
            <person name="Kolonay J.F."/>
            <person name="Madupu R."/>
            <person name="Nelson W.C."/>
            <person name="White O."/>
            <person name="Peterson J.D."/>
            <person name="Khouri H.M."/>
            <person name="Hance I."/>
            <person name="Chris Lee P."/>
            <person name="Holtzapple E.K."/>
            <person name="Scanlan D."/>
            <person name="Tran K."/>
            <person name="Moazzez A."/>
            <person name="Utterback T.R."/>
            <person name="Rizzo M."/>
            <person name="Lee K."/>
            <person name="Kosack D."/>
            <person name="Moestl D."/>
            <person name="Wedler H."/>
            <person name="Lauber J."/>
            <person name="Stjepandic D."/>
            <person name="Hoheisel J."/>
            <person name="Straetz M."/>
            <person name="Heim S."/>
            <person name="Kiewitz C."/>
            <person name="Eisen J.A."/>
            <person name="Timmis K.N."/>
            <person name="Duesterhoeft A."/>
            <person name="Tuemmler B."/>
            <person name="Fraser C.M."/>
        </authorList>
    </citation>
    <scope>NUCLEOTIDE SEQUENCE [LARGE SCALE GENOMIC DNA]</scope>
    <source>
        <strain>ATCC 47054 / DSM 6125 / CFBP 8728 / NCIMB 11950 / KT2440</strain>
    </source>
</reference>
<protein>
    <recommendedName>
        <fullName evidence="1">Argininosuccinate synthase</fullName>
        <ecNumber evidence="1">6.3.4.5</ecNumber>
    </recommendedName>
    <alternativeName>
        <fullName evidence="1">Citrulline--aspartate ligase</fullName>
    </alternativeName>
</protein>
<name>ASSY_PSEPK</name>
<proteinExistence type="inferred from homology"/>
<comment type="catalytic activity">
    <reaction evidence="1">
        <text>L-citrulline + L-aspartate + ATP = 2-(N(omega)-L-arginino)succinate + AMP + diphosphate + H(+)</text>
        <dbReference type="Rhea" id="RHEA:10932"/>
        <dbReference type="ChEBI" id="CHEBI:15378"/>
        <dbReference type="ChEBI" id="CHEBI:29991"/>
        <dbReference type="ChEBI" id="CHEBI:30616"/>
        <dbReference type="ChEBI" id="CHEBI:33019"/>
        <dbReference type="ChEBI" id="CHEBI:57472"/>
        <dbReference type="ChEBI" id="CHEBI:57743"/>
        <dbReference type="ChEBI" id="CHEBI:456215"/>
        <dbReference type="EC" id="6.3.4.5"/>
    </reaction>
</comment>
<comment type="pathway">
    <text evidence="1">Amino-acid biosynthesis; L-arginine biosynthesis; L-arginine from L-ornithine and carbamoyl phosphate: step 2/3.</text>
</comment>
<comment type="subunit">
    <text evidence="1">Homotetramer.</text>
</comment>
<comment type="subcellular location">
    <subcellularLocation>
        <location evidence="1">Cytoplasm</location>
    </subcellularLocation>
</comment>
<comment type="similarity">
    <text evidence="1">Belongs to the argininosuccinate synthase family. Type 1 subfamily.</text>
</comment>
<dbReference type="EC" id="6.3.4.5" evidence="1"/>
<dbReference type="EMBL" id="AE015451">
    <property type="protein sequence ID" value="AAN66713.1"/>
    <property type="molecule type" value="Genomic_DNA"/>
</dbReference>
<dbReference type="RefSeq" id="NP_743249.1">
    <property type="nucleotide sequence ID" value="NC_002947.4"/>
</dbReference>
<dbReference type="RefSeq" id="WP_003254941.1">
    <property type="nucleotide sequence ID" value="NZ_CP169744.1"/>
</dbReference>
<dbReference type="SMR" id="P59604"/>
<dbReference type="STRING" id="160488.PP_1088"/>
<dbReference type="PaxDb" id="160488-PP_1088"/>
<dbReference type="KEGG" id="ppu:PP_1088"/>
<dbReference type="PATRIC" id="fig|160488.4.peg.1154"/>
<dbReference type="eggNOG" id="COG0137">
    <property type="taxonomic scope" value="Bacteria"/>
</dbReference>
<dbReference type="HOGENOM" id="CLU_032784_4_2_6"/>
<dbReference type="OrthoDB" id="9801641at2"/>
<dbReference type="PhylomeDB" id="P59604"/>
<dbReference type="BioCyc" id="PPUT160488:G1G01-1161-MONOMER"/>
<dbReference type="UniPathway" id="UPA00068">
    <property type="reaction ID" value="UER00113"/>
</dbReference>
<dbReference type="Proteomes" id="UP000000556">
    <property type="component" value="Chromosome"/>
</dbReference>
<dbReference type="GO" id="GO:0005737">
    <property type="term" value="C:cytoplasm"/>
    <property type="evidence" value="ECO:0007669"/>
    <property type="project" value="UniProtKB-SubCell"/>
</dbReference>
<dbReference type="GO" id="GO:0004055">
    <property type="term" value="F:argininosuccinate synthase activity"/>
    <property type="evidence" value="ECO:0007669"/>
    <property type="project" value="UniProtKB-UniRule"/>
</dbReference>
<dbReference type="GO" id="GO:0005524">
    <property type="term" value="F:ATP binding"/>
    <property type="evidence" value="ECO:0007669"/>
    <property type="project" value="UniProtKB-UniRule"/>
</dbReference>
<dbReference type="GO" id="GO:0000053">
    <property type="term" value="P:argininosuccinate metabolic process"/>
    <property type="evidence" value="ECO:0007669"/>
    <property type="project" value="TreeGrafter"/>
</dbReference>
<dbReference type="GO" id="GO:0006526">
    <property type="term" value="P:L-arginine biosynthetic process"/>
    <property type="evidence" value="ECO:0007669"/>
    <property type="project" value="UniProtKB-UniRule"/>
</dbReference>
<dbReference type="GO" id="GO:0000050">
    <property type="term" value="P:urea cycle"/>
    <property type="evidence" value="ECO:0007669"/>
    <property type="project" value="TreeGrafter"/>
</dbReference>
<dbReference type="CDD" id="cd01999">
    <property type="entry name" value="ASS"/>
    <property type="match status" value="1"/>
</dbReference>
<dbReference type="FunFam" id="1.20.5.470:FF:000001">
    <property type="entry name" value="Argininosuccinate synthase"/>
    <property type="match status" value="1"/>
</dbReference>
<dbReference type="FunFam" id="3.40.50.620:FF:000019">
    <property type="entry name" value="Argininosuccinate synthase"/>
    <property type="match status" value="1"/>
</dbReference>
<dbReference type="FunFam" id="3.90.1260.10:FF:000001">
    <property type="entry name" value="Argininosuccinate synthase"/>
    <property type="match status" value="1"/>
</dbReference>
<dbReference type="Gene3D" id="3.90.1260.10">
    <property type="entry name" value="Argininosuccinate synthetase, chain A, domain 2"/>
    <property type="match status" value="1"/>
</dbReference>
<dbReference type="Gene3D" id="3.40.50.620">
    <property type="entry name" value="HUPs"/>
    <property type="match status" value="1"/>
</dbReference>
<dbReference type="Gene3D" id="1.20.5.470">
    <property type="entry name" value="Single helix bin"/>
    <property type="match status" value="1"/>
</dbReference>
<dbReference type="HAMAP" id="MF_00005">
    <property type="entry name" value="Arg_succ_synth_type1"/>
    <property type="match status" value="1"/>
</dbReference>
<dbReference type="InterPro" id="IPR048268">
    <property type="entry name" value="Arginosuc_syn_C"/>
</dbReference>
<dbReference type="InterPro" id="IPR048267">
    <property type="entry name" value="Arginosuc_syn_N"/>
</dbReference>
<dbReference type="InterPro" id="IPR001518">
    <property type="entry name" value="Arginosuc_synth"/>
</dbReference>
<dbReference type="InterPro" id="IPR018223">
    <property type="entry name" value="Arginosuc_synth_CS"/>
</dbReference>
<dbReference type="InterPro" id="IPR023434">
    <property type="entry name" value="Arginosuc_synth_type_1_subfam"/>
</dbReference>
<dbReference type="InterPro" id="IPR024074">
    <property type="entry name" value="AS_cat/multimer_dom_body"/>
</dbReference>
<dbReference type="InterPro" id="IPR014729">
    <property type="entry name" value="Rossmann-like_a/b/a_fold"/>
</dbReference>
<dbReference type="NCBIfam" id="TIGR00032">
    <property type="entry name" value="argG"/>
    <property type="match status" value="1"/>
</dbReference>
<dbReference type="NCBIfam" id="NF001770">
    <property type="entry name" value="PRK00509.1"/>
    <property type="match status" value="1"/>
</dbReference>
<dbReference type="PANTHER" id="PTHR11587">
    <property type="entry name" value="ARGININOSUCCINATE SYNTHASE"/>
    <property type="match status" value="1"/>
</dbReference>
<dbReference type="PANTHER" id="PTHR11587:SF2">
    <property type="entry name" value="ARGININOSUCCINATE SYNTHASE"/>
    <property type="match status" value="1"/>
</dbReference>
<dbReference type="Pfam" id="PF20979">
    <property type="entry name" value="Arginosuc_syn_C"/>
    <property type="match status" value="1"/>
</dbReference>
<dbReference type="Pfam" id="PF00764">
    <property type="entry name" value="Arginosuc_synth"/>
    <property type="match status" value="1"/>
</dbReference>
<dbReference type="SUPFAM" id="SSF52402">
    <property type="entry name" value="Adenine nucleotide alpha hydrolases-like"/>
    <property type="match status" value="1"/>
</dbReference>
<dbReference type="SUPFAM" id="SSF69864">
    <property type="entry name" value="Argininosuccinate synthetase, C-terminal domain"/>
    <property type="match status" value="1"/>
</dbReference>
<dbReference type="PROSITE" id="PS00564">
    <property type="entry name" value="ARGININOSUCCIN_SYN_1"/>
    <property type="match status" value="1"/>
</dbReference>
<dbReference type="PROSITE" id="PS00565">
    <property type="entry name" value="ARGININOSUCCIN_SYN_2"/>
    <property type="match status" value="1"/>
</dbReference>